<name>PURA_BIFLS</name>
<feature type="chain" id="PRO_1000116453" description="Adenylosuccinate synthetase">
    <location>
        <begin position="1"/>
        <end position="428"/>
    </location>
</feature>
<feature type="active site" description="Proton acceptor" evidence="1">
    <location>
        <position position="13"/>
    </location>
</feature>
<feature type="active site" description="Proton donor" evidence="1">
    <location>
        <position position="41"/>
    </location>
</feature>
<feature type="binding site" evidence="1">
    <location>
        <begin position="12"/>
        <end position="18"/>
    </location>
    <ligand>
        <name>GTP</name>
        <dbReference type="ChEBI" id="CHEBI:37565"/>
    </ligand>
</feature>
<feature type="binding site" description="in other chain" evidence="1">
    <location>
        <begin position="13"/>
        <end position="16"/>
    </location>
    <ligand>
        <name>IMP</name>
        <dbReference type="ChEBI" id="CHEBI:58053"/>
        <note>ligand shared between dimeric partners</note>
    </ligand>
</feature>
<feature type="binding site" evidence="1">
    <location>
        <position position="13"/>
    </location>
    <ligand>
        <name>Mg(2+)</name>
        <dbReference type="ChEBI" id="CHEBI:18420"/>
    </ligand>
</feature>
<feature type="binding site" description="in other chain" evidence="1">
    <location>
        <begin position="38"/>
        <end position="41"/>
    </location>
    <ligand>
        <name>IMP</name>
        <dbReference type="ChEBI" id="CHEBI:58053"/>
        <note>ligand shared between dimeric partners</note>
    </ligand>
</feature>
<feature type="binding site" evidence="1">
    <location>
        <begin position="40"/>
        <end position="42"/>
    </location>
    <ligand>
        <name>GTP</name>
        <dbReference type="ChEBI" id="CHEBI:37565"/>
    </ligand>
</feature>
<feature type="binding site" evidence="1">
    <location>
        <position position="40"/>
    </location>
    <ligand>
        <name>Mg(2+)</name>
        <dbReference type="ChEBI" id="CHEBI:18420"/>
    </ligand>
</feature>
<feature type="binding site" description="in other chain" evidence="1">
    <location>
        <position position="128"/>
    </location>
    <ligand>
        <name>IMP</name>
        <dbReference type="ChEBI" id="CHEBI:58053"/>
        <note>ligand shared between dimeric partners</note>
    </ligand>
</feature>
<feature type="binding site" evidence="1">
    <location>
        <position position="142"/>
    </location>
    <ligand>
        <name>IMP</name>
        <dbReference type="ChEBI" id="CHEBI:58053"/>
        <note>ligand shared between dimeric partners</note>
    </ligand>
</feature>
<feature type="binding site" description="in other chain" evidence="1">
    <location>
        <position position="223"/>
    </location>
    <ligand>
        <name>IMP</name>
        <dbReference type="ChEBI" id="CHEBI:58053"/>
        <note>ligand shared between dimeric partners</note>
    </ligand>
</feature>
<feature type="binding site" description="in other chain" evidence="1">
    <location>
        <position position="238"/>
    </location>
    <ligand>
        <name>IMP</name>
        <dbReference type="ChEBI" id="CHEBI:58053"/>
        <note>ligand shared between dimeric partners</note>
    </ligand>
</feature>
<feature type="binding site" evidence="1">
    <location>
        <begin position="298"/>
        <end position="304"/>
    </location>
    <ligand>
        <name>substrate</name>
    </ligand>
</feature>
<feature type="binding site" description="in other chain" evidence="1">
    <location>
        <position position="302"/>
    </location>
    <ligand>
        <name>IMP</name>
        <dbReference type="ChEBI" id="CHEBI:58053"/>
        <note>ligand shared between dimeric partners</note>
    </ligand>
</feature>
<feature type="binding site" evidence="1">
    <location>
        <position position="304"/>
    </location>
    <ligand>
        <name>GTP</name>
        <dbReference type="ChEBI" id="CHEBI:37565"/>
    </ligand>
</feature>
<feature type="binding site" evidence="1">
    <location>
        <begin position="330"/>
        <end position="332"/>
    </location>
    <ligand>
        <name>GTP</name>
        <dbReference type="ChEBI" id="CHEBI:37565"/>
    </ligand>
</feature>
<feature type="binding site" evidence="1">
    <location>
        <begin position="412"/>
        <end position="414"/>
    </location>
    <ligand>
        <name>GTP</name>
        <dbReference type="ChEBI" id="CHEBI:37565"/>
    </ligand>
</feature>
<organism>
    <name type="scientific">Bifidobacterium longum subsp. infantis (strain ATCC 15697 / DSM 20088 / JCM 1222 / NCTC 11817 / S12)</name>
    <dbReference type="NCBI Taxonomy" id="391904"/>
    <lineage>
        <taxon>Bacteria</taxon>
        <taxon>Bacillati</taxon>
        <taxon>Actinomycetota</taxon>
        <taxon>Actinomycetes</taxon>
        <taxon>Bifidobacteriales</taxon>
        <taxon>Bifidobacteriaceae</taxon>
        <taxon>Bifidobacterium</taxon>
    </lineage>
</organism>
<protein>
    <recommendedName>
        <fullName evidence="1">Adenylosuccinate synthetase</fullName>
        <shortName evidence="1">AMPSase</shortName>
        <shortName evidence="1">AdSS</shortName>
        <ecNumber evidence="1">6.3.4.4</ecNumber>
    </recommendedName>
    <alternativeName>
        <fullName evidence="1">IMP--aspartate ligase</fullName>
    </alternativeName>
</protein>
<comment type="function">
    <text evidence="1">Plays an important role in the de novo pathway of purine nucleotide biosynthesis. Catalyzes the first committed step in the biosynthesis of AMP from IMP.</text>
</comment>
<comment type="catalytic activity">
    <reaction evidence="1">
        <text>IMP + L-aspartate + GTP = N(6)-(1,2-dicarboxyethyl)-AMP + GDP + phosphate + 2 H(+)</text>
        <dbReference type="Rhea" id="RHEA:15753"/>
        <dbReference type="ChEBI" id="CHEBI:15378"/>
        <dbReference type="ChEBI" id="CHEBI:29991"/>
        <dbReference type="ChEBI" id="CHEBI:37565"/>
        <dbReference type="ChEBI" id="CHEBI:43474"/>
        <dbReference type="ChEBI" id="CHEBI:57567"/>
        <dbReference type="ChEBI" id="CHEBI:58053"/>
        <dbReference type="ChEBI" id="CHEBI:58189"/>
        <dbReference type="EC" id="6.3.4.4"/>
    </reaction>
</comment>
<comment type="cofactor">
    <cofactor evidence="1">
        <name>Mg(2+)</name>
        <dbReference type="ChEBI" id="CHEBI:18420"/>
    </cofactor>
    <text evidence="1">Binds 1 Mg(2+) ion per subunit.</text>
</comment>
<comment type="pathway">
    <text evidence="1">Purine metabolism; AMP biosynthesis via de novo pathway; AMP from IMP: step 1/2.</text>
</comment>
<comment type="subunit">
    <text evidence="1">Homodimer.</text>
</comment>
<comment type="subcellular location">
    <subcellularLocation>
        <location evidence="1">Cytoplasm</location>
    </subcellularLocation>
</comment>
<comment type="similarity">
    <text evidence="1">Belongs to the adenylosuccinate synthetase family.</text>
</comment>
<evidence type="ECO:0000255" key="1">
    <source>
        <dbReference type="HAMAP-Rule" id="MF_00011"/>
    </source>
</evidence>
<dbReference type="EC" id="6.3.4.4" evidence="1"/>
<dbReference type="EMBL" id="CP001095">
    <property type="protein sequence ID" value="ACJ51252.1"/>
    <property type="molecule type" value="Genomic_DNA"/>
</dbReference>
<dbReference type="EMBL" id="AP010889">
    <property type="protein sequence ID" value="BAJ67719.1"/>
    <property type="molecule type" value="Genomic_DNA"/>
</dbReference>
<dbReference type="RefSeq" id="WP_012576573.1">
    <property type="nucleotide sequence ID" value="NZ_JDTT01000004.1"/>
</dbReference>
<dbReference type="SMR" id="B7GT29"/>
<dbReference type="KEGG" id="bln:Blon_0123"/>
<dbReference type="KEGG" id="blon:BLIJ_0124"/>
<dbReference type="PATRIC" id="fig|391904.8.peg.128"/>
<dbReference type="HOGENOM" id="CLU_029848_0_0_11"/>
<dbReference type="UniPathway" id="UPA00075">
    <property type="reaction ID" value="UER00335"/>
</dbReference>
<dbReference type="Proteomes" id="UP000001360">
    <property type="component" value="Chromosome"/>
</dbReference>
<dbReference type="GO" id="GO:0005737">
    <property type="term" value="C:cytoplasm"/>
    <property type="evidence" value="ECO:0007669"/>
    <property type="project" value="UniProtKB-SubCell"/>
</dbReference>
<dbReference type="GO" id="GO:0004019">
    <property type="term" value="F:adenylosuccinate synthase activity"/>
    <property type="evidence" value="ECO:0007669"/>
    <property type="project" value="UniProtKB-UniRule"/>
</dbReference>
<dbReference type="GO" id="GO:0005525">
    <property type="term" value="F:GTP binding"/>
    <property type="evidence" value="ECO:0007669"/>
    <property type="project" value="UniProtKB-UniRule"/>
</dbReference>
<dbReference type="GO" id="GO:0000287">
    <property type="term" value="F:magnesium ion binding"/>
    <property type="evidence" value="ECO:0007669"/>
    <property type="project" value="UniProtKB-UniRule"/>
</dbReference>
<dbReference type="GO" id="GO:0044208">
    <property type="term" value="P:'de novo' AMP biosynthetic process"/>
    <property type="evidence" value="ECO:0007669"/>
    <property type="project" value="UniProtKB-UniRule"/>
</dbReference>
<dbReference type="GO" id="GO:0046040">
    <property type="term" value="P:IMP metabolic process"/>
    <property type="evidence" value="ECO:0007669"/>
    <property type="project" value="TreeGrafter"/>
</dbReference>
<dbReference type="CDD" id="cd03108">
    <property type="entry name" value="AdSS"/>
    <property type="match status" value="1"/>
</dbReference>
<dbReference type="FunFam" id="1.10.300.10:FF:000001">
    <property type="entry name" value="Adenylosuccinate synthetase"/>
    <property type="match status" value="1"/>
</dbReference>
<dbReference type="FunFam" id="3.90.170.10:FF:000001">
    <property type="entry name" value="Adenylosuccinate synthetase"/>
    <property type="match status" value="1"/>
</dbReference>
<dbReference type="Gene3D" id="3.40.440.10">
    <property type="entry name" value="Adenylosuccinate Synthetase, subunit A, domain 1"/>
    <property type="match status" value="1"/>
</dbReference>
<dbReference type="Gene3D" id="1.10.300.10">
    <property type="entry name" value="Adenylosuccinate Synthetase, subunit A, domain 2"/>
    <property type="match status" value="1"/>
</dbReference>
<dbReference type="Gene3D" id="3.90.170.10">
    <property type="entry name" value="Adenylosuccinate Synthetase, subunit A, domain 3"/>
    <property type="match status" value="1"/>
</dbReference>
<dbReference type="HAMAP" id="MF_00011">
    <property type="entry name" value="Adenylosucc_synth"/>
    <property type="match status" value="1"/>
</dbReference>
<dbReference type="InterPro" id="IPR018220">
    <property type="entry name" value="Adenylosuccin_syn_GTP-bd"/>
</dbReference>
<dbReference type="InterPro" id="IPR033128">
    <property type="entry name" value="Adenylosuccin_syn_Lys_AS"/>
</dbReference>
<dbReference type="InterPro" id="IPR042109">
    <property type="entry name" value="Adenylosuccinate_synth_dom1"/>
</dbReference>
<dbReference type="InterPro" id="IPR042110">
    <property type="entry name" value="Adenylosuccinate_synth_dom2"/>
</dbReference>
<dbReference type="InterPro" id="IPR042111">
    <property type="entry name" value="Adenylosuccinate_synth_dom3"/>
</dbReference>
<dbReference type="InterPro" id="IPR001114">
    <property type="entry name" value="Adenylosuccinate_synthetase"/>
</dbReference>
<dbReference type="InterPro" id="IPR027417">
    <property type="entry name" value="P-loop_NTPase"/>
</dbReference>
<dbReference type="NCBIfam" id="NF002223">
    <property type="entry name" value="PRK01117.1"/>
    <property type="match status" value="1"/>
</dbReference>
<dbReference type="NCBIfam" id="TIGR00184">
    <property type="entry name" value="purA"/>
    <property type="match status" value="1"/>
</dbReference>
<dbReference type="PANTHER" id="PTHR11846">
    <property type="entry name" value="ADENYLOSUCCINATE SYNTHETASE"/>
    <property type="match status" value="1"/>
</dbReference>
<dbReference type="PANTHER" id="PTHR11846:SF0">
    <property type="entry name" value="ADENYLOSUCCINATE SYNTHETASE"/>
    <property type="match status" value="1"/>
</dbReference>
<dbReference type="Pfam" id="PF00709">
    <property type="entry name" value="Adenylsucc_synt"/>
    <property type="match status" value="1"/>
</dbReference>
<dbReference type="SMART" id="SM00788">
    <property type="entry name" value="Adenylsucc_synt"/>
    <property type="match status" value="1"/>
</dbReference>
<dbReference type="SUPFAM" id="SSF52540">
    <property type="entry name" value="P-loop containing nucleoside triphosphate hydrolases"/>
    <property type="match status" value="1"/>
</dbReference>
<dbReference type="PROSITE" id="PS01266">
    <property type="entry name" value="ADENYLOSUCCIN_SYN_1"/>
    <property type="match status" value="1"/>
</dbReference>
<dbReference type="PROSITE" id="PS00513">
    <property type="entry name" value="ADENYLOSUCCIN_SYN_2"/>
    <property type="match status" value="1"/>
</dbReference>
<proteinExistence type="inferred from homology"/>
<reference key="1">
    <citation type="journal article" date="2008" name="Proc. Natl. Acad. Sci. U.S.A.">
        <title>The genome sequence of Bifidobacterium longum subsp. infantis reveals adaptations for milk utilization within the infant microbiome.</title>
        <authorList>
            <person name="Sela D.A."/>
            <person name="Chapman J."/>
            <person name="Adeuya A."/>
            <person name="Kim J.H."/>
            <person name="Chen F."/>
            <person name="Whitehead T.R."/>
            <person name="Lapidus A."/>
            <person name="Rokhsar D.S."/>
            <person name="Lebrilla C.B."/>
            <person name="German J.B."/>
            <person name="Price N.P."/>
            <person name="Richardson P.M."/>
            <person name="Mills D.A."/>
        </authorList>
    </citation>
    <scope>NUCLEOTIDE SEQUENCE [LARGE SCALE GENOMIC DNA]</scope>
    <source>
        <strain>ATCC 15697 / DSM 20088 / JCM 1222 / NCTC 11817 / S12</strain>
    </source>
</reference>
<reference key="2">
    <citation type="journal article" date="2011" name="Nature">
        <title>Bifidobacteria can protect from enteropathogenic infection through production of acetate.</title>
        <authorList>
            <person name="Fukuda S."/>
            <person name="Toh H."/>
            <person name="Hase K."/>
            <person name="Oshima K."/>
            <person name="Nakanishi Y."/>
            <person name="Yoshimura K."/>
            <person name="Tobe T."/>
            <person name="Clarke J.M."/>
            <person name="Topping D.L."/>
            <person name="Suzuki T."/>
            <person name="Taylor T.D."/>
            <person name="Itoh K."/>
            <person name="Kikuchi J."/>
            <person name="Morita H."/>
            <person name="Hattori M."/>
            <person name="Ohno H."/>
        </authorList>
    </citation>
    <scope>NUCLEOTIDE SEQUENCE [LARGE SCALE GENOMIC DNA]</scope>
    <source>
        <strain>ATCC 15697 / DSM 20088 / JCM 1222 / NCTC 11817 / S12</strain>
    </source>
</reference>
<sequence>MPGIVLIGAQWGDEGKGKATDLIGTKVDYVARFNGGNNAGHSVVVGDESYALHLLPSGIINPNLTPVIGNGVVVDPEVLFEEIDGLESRGIDCSHLKVSEAAHIIAPYHRTLDKVTERFLGKHKIGTTGRGIGPAYADKINRVGIRVHDLFNADHLHDKVEASLHQKNQMLVKLYNRRPIDVDQTTEELLKLGERLKPYVANTGLILNKALDEGKTVLFEGAQATMLDVDHGTYPFVTSSNPTAGGACTGTGVGPTKITRVIGVSKAYVTRVGEGPFPTELLDESGEWLRQQGHEFGVTTGRPRRCGWFDAVVNRYASQVNGLTDIVLTKLDVLTGLKEIPICVAYDVDGERHDDMPTDQAAFAAAKPIYETMPGWDEDISDCHSFDELPATCQAYVKRLEELSGCRISVIGTGPQRDHVIQINSLVD</sequence>
<accession>B7GT29</accession>
<accession>E8MMY1</accession>
<keyword id="KW-0963">Cytoplasm</keyword>
<keyword id="KW-0342">GTP-binding</keyword>
<keyword id="KW-0436">Ligase</keyword>
<keyword id="KW-0460">Magnesium</keyword>
<keyword id="KW-0479">Metal-binding</keyword>
<keyword id="KW-0547">Nucleotide-binding</keyword>
<keyword id="KW-0658">Purine biosynthesis</keyword>
<gene>
    <name evidence="1" type="primary">purA</name>
    <name type="ordered locus">Blon_0123</name>
    <name type="ordered locus">BLIJ_0124</name>
</gene>